<name>KT222_MOUSE</name>
<feature type="chain" id="PRO_0000344216" description="Keratin-like protein KRT222">
    <location>
        <begin position="1"/>
        <end position="294"/>
    </location>
</feature>
<feature type="domain" description="IF rod" evidence="2">
    <location>
        <begin position="1"/>
        <end position="150"/>
    </location>
</feature>
<feature type="coiled-coil region" evidence="1">
    <location>
        <begin position="1"/>
        <end position="151"/>
    </location>
</feature>
<feature type="splice variant" id="VSP_034745" description="In isoform 2." evidence="3">
    <location>
        <begin position="1"/>
        <end position="40"/>
    </location>
</feature>
<evidence type="ECO:0000255" key="1"/>
<evidence type="ECO:0000255" key="2">
    <source>
        <dbReference type="PROSITE-ProRule" id="PRU01188"/>
    </source>
</evidence>
<evidence type="ECO:0000303" key="3">
    <source>
    </source>
</evidence>
<evidence type="ECO:0000305" key="4"/>
<protein>
    <recommendedName>
        <fullName>Keratin-like protein KRT222</fullName>
    </recommendedName>
    <alternativeName>
        <fullName>Keratin-222</fullName>
    </alternativeName>
</protein>
<proteinExistence type="evidence at transcript level"/>
<organism>
    <name type="scientific">Mus musculus</name>
    <name type="common">Mouse</name>
    <dbReference type="NCBI Taxonomy" id="10090"/>
    <lineage>
        <taxon>Eukaryota</taxon>
        <taxon>Metazoa</taxon>
        <taxon>Chordata</taxon>
        <taxon>Craniata</taxon>
        <taxon>Vertebrata</taxon>
        <taxon>Euteleostomi</taxon>
        <taxon>Mammalia</taxon>
        <taxon>Eutheria</taxon>
        <taxon>Euarchontoglires</taxon>
        <taxon>Glires</taxon>
        <taxon>Rodentia</taxon>
        <taxon>Myomorpha</taxon>
        <taxon>Muroidea</taxon>
        <taxon>Muridae</taxon>
        <taxon>Murinae</taxon>
        <taxon>Mus</taxon>
        <taxon>Mus</taxon>
    </lineage>
</organism>
<gene>
    <name type="primary">Krt222</name>
</gene>
<sequence length="294" mass="34198">MELSQLLNEIRANYEQLLTRNQIETVLSTRIQLEEDITKKMDKDGEALKAAQAELKEARRQCHHLQVEIESLHAVERGLENSLQASEQHYQMQLQDLESVIGRLERELQEVRRGIERQLREHEMLLNTKMRLEQEIATYRRLLEQEEIRYYGCIQGEKKEEKPTKSKVGFLLPSAIINEISFSTKVSQKYENENMETVTKQAVVNRDVKESAEAHGTIQTEKVDEVIKEWEGSFFKDNPRLRKKSVSLRFDLHLAATDEGCLESRQDNLPDIEVRLIMRRSCSIPSIKPPPGTN</sequence>
<dbReference type="EMBL" id="AK031954">
    <property type="protein sequence ID" value="BAC27620.1"/>
    <property type="molecule type" value="mRNA"/>
</dbReference>
<dbReference type="EMBL" id="AK138778">
    <property type="protein sequence ID" value="BAE23776.1"/>
    <property type="status" value="ALT_SEQ"/>
    <property type="molecule type" value="mRNA"/>
</dbReference>
<dbReference type="EMBL" id="AL590991">
    <property type="status" value="NOT_ANNOTATED_CDS"/>
    <property type="molecule type" value="Genomic_DNA"/>
</dbReference>
<dbReference type="EMBL" id="BC079890">
    <property type="protein sequence ID" value="AAH79890.1"/>
    <property type="molecule type" value="mRNA"/>
</dbReference>
<dbReference type="CCDS" id="CCDS25375.1">
    <molecule id="Q8CCX5-1"/>
</dbReference>
<dbReference type="CCDS" id="CCDS88251.1">
    <molecule id="Q8CCX5-2"/>
</dbReference>
<dbReference type="RefSeq" id="NP_001348513.1">
    <molecule id="Q8CCX5-2"/>
    <property type="nucleotide sequence ID" value="NM_001361584.1"/>
</dbReference>
<dbReference type="RefSeq" id="NP_766534.1">
    <molecule id="Q8CCX5-1"/>
    <property type="nucleotide sequence ID" value="NM_172946.3"/>
</dbReference>
<dbReference type="RefSeq" id="XP_006533475.1">
    <property type="nucleotide sequence ID" value="XM_006533412.3"/>
</dbReference>
<dbReference type="SMR" id="Q8CCX5"/>
<dbReference type="FunCoup" id="Q8CCX5">
    <property type="interactions" value="56"/>
</dbReference>
<dbReference type="STRING" id="10090.ENSMUSP00000099421"/>
<dbReference type="PhosphoSitePlus" id="Q8CCX5"/>
<dbReference type="jPOST" id="Q8CCX5"/>
<dbReference type="PaxDb" id="10090-ENSMUSP00000099421"/>
<dbReference type="PeptideAtlas" id="Q8CCX5"/>
<dbReference type="ProteomicsDB" id="265030">
    <molecule id="Q8CCX5-1"/>
</dbReference>
<dbReference type="ProteomicsDB" id="265031">
    <molecule id="Q8CCX5-2"/>
</dbReference>
<dbReference type="DNASU" id="268481"/>
<dbReference type="Ensembl" id="ENSMUST00000038214.7">
    <molecule id="Q8CCX5-2"/>
    <property type="protein sequence ID" value="ENSMUSP00000044561.7"/>
    <property type="gene ID" value="ENSMUSG00000035849.15"/>
</dbReference>
<dbReference type="Ensembl" id="ENSMUST00000103132.10">
    <molecule id="Q8CCX5-1"/>
    <property type="protein sequence ID" value="ENSMUSP00000099421.4"/>
    <property type="gene ID" value="ENSMUSG00000035849.15"/>
</dbReference>
<dbReference type="GeneID" id="268481"/>
<dbReference type="KEGG" id="mmu:268481"/>
<dbReference type="UCSC" id="uc007lik.1">
    <molecule id="Q8CCX5-1"/>
    <property type="organism name" value="mouse"/>
</dbReference>
<dbReference type="AGR" id="MGI:2442728"/>
<dbReference type="CTD" id="125113"/>
<dbReference type="MGI" id="MGI:2442728">
    <property type="gene designation" value="Krt222"/>
</dbReference>
<dbReference type="VEuPathDB" id="HostDB:ENSMUSG00000035849"/>
<dbReference type="eggNOG" id="ENOG502QQ07">
    <property type="taxonomic scope" value="Eukaryota"/>
</dbReference>
<dbReference type="GeneTree" id="ENSGT00940000159655"/>
<dbReference type="HOGENOM" id="CLU_101833_0_0_1"/>
<dbReference type="InParanoid" id="Q8CCX5"/>
<dbReference type="OMA" id="EEGCLHT"/>
<dbReference type="OrthoDB" id="8861979at2759"/>
<dbReference type="PhylomeDB" id="Q8CCX5"/>
<dbReference type="TreeFam" id="TF332442"/>
<dbReference type="BioGRID-ORCS" id="268481">
    <property type="hits" value="0 hits in 77 CRISPR screens"/>
</dbReference>
<dbReference type="PRO" id="PR:Q8CCX5"/>
<dbReference type="Proteomes" id="UP000000589">
    <property type="component" value="Chromosome 11"/>
</dbReference>
<dbReference type="RNAct" id="Q8CCX5">
    <property type="molecule type" value="protein"/>
</dbReference>
<dbReference type="Bgee" id="ENSMUSG00000035849">
    <property type="expression patterns" value="Expressed in facial nucleus and 114 other cell types or tissues"/>
</dbReference>
<dbReference type="GO" id="GO:0005882">
    <property type="term" value="C:intermediate filament"/>
    <property type="evidence" value="ECO:0007669"/>
    <property type="project" value="UniProtKB-KW"/>
</dbReference>
<dbReference type="GO" id="GO:0005198">
    <property type="term" value="F:structural molecule activity"/>
    <property type="evidence" value="ECO:0007669"/>
    <property type="project" value="InterPro"/>
</dbReference>
<dbReference type="FunFam" id="1.20.5.170:FF:000002">
    <property type="entry name" value="Type I keratin KA11"/>
    <property type="match status" value="1"/>
</dbReference>
<dbReference type="Gene3D" id="1.20.5.170">
    <property type="match status" value="1"/>
</dbReference>
<dbReference type="Gene3D" id="1.20.5.500">
    <property type="entry name" value="Single helix bin"/>
    <property type="match status" value="1"/>
</dbReference>
<dbReference type="InterPro" id="IPR018039">
    <property type="entry name" value="IF_conserved"/>
</dbReference>
<dbReference type="InterPro" id="IPR052857">
    <property type="entry name" value="IF_Keratin-like"/>
</dbReference>
<dbReference type="InterPro" id="IPR039008">
    <property type="entry name" value="IF_rod_dom"/>
</dbReference>
<dbReference type="InterPro" id="IPR002957">
    <property type="entry name" value="Keratin_I"/>
</dbReference>
<dbReference type="PANTHER" id="PTHR47082">
    <property type="entry name" value="KERATIN-LIKE PROTEIN KRT222"/>
    <property type="match status" value="1"/>
</dbReference>
<dbReference type="PANTHER" id="PTHR47082:SF1">
    <property type="entry name" value="KERATIN-LIKE PROTEIN KRT222"/>
    <property type="match status" value="1"/>
</dbReference>
<dbReference type="Pfam" id="PF00038">
    <property type="entry name" value="Filament"/>
    <property type="match status" value="1"/>
</dbReference>
<dbReference type="PRINTS" id="PR01248">
    <property type="entry name" value="TYPE1KERATIN"/>
</dbReference>
<dbReference type="SUPFAM" id="SSF64593">
    <property type="entry name" value="Intermediate filament protein, coiled coil region"/>
    <property type="match status" value="1"/>
</dbReference>
<dbReference type="PROSITE" id="PS00226">
    <property type="entry name" value="IF_ROD_1"/>
    <property type="match status" value="1"/>
</dbReference>
<dbReference type="PROSITE" id="PS51842">
    <property type="entry name" value="IF_ROD_2"/>
    <property type="match status" value="1"/>
</dbReference>
<reference key="1">
    <citation type="journal article" date="2005" name="Science">
        <title>The transcriptional landscape of the mammalian genome.</title>
        <authorList>
            <person name="Carninci P."/>
            <person name="Kasukawa T."/>
            <person name="Katayama S."/>
            <person name="Gough J."/>
            <person name="Frith M.C."/>
            <person name="Maeda N."/>
            <person name="Oyama R."/>
            <person name="Ravasi T."/>
            <person name="Lenhard B."/>
            <person name="Wells C."/>
            <person name="Kodzius R."/>
            <person name="Shimokawa K."/>
            <person name="Bajic V.B."/>
            <person name="Brenner S.E."/>
            <person name="Batalov S."/>
            <person name="Forrest A.R."/>
            <person name="Zavolan M."/>
            <person name="Davis M.J."/>
            <person name="Wilming L.G."/>
            <person name="Aidinis V."/>
            <person name="Allen J.E."/>
            <person name="Ambesi-Impiombato A."/>
            <person name="Apweiler R."/>
            <person name="Aturaliya R.N."/>
            <person name="Bailey T.L."/>
            <person name="Bansal M."/>
            <person name="Baxter L."/>
            <person name="Beisel K.W."/>
            <person name="Bersano T."/>
            <person name="Bono H."/>
            <person name="Chalk A.M."/>
            <person name="Chiu K.P."/>
            <person name="Choudhary V."/>
            <person name="Christoffels A."/>
            <person name="Clutterbuck D.R."/>
            <person name="Crowe M.L."/>
            <person name="Dalla E."/>
            <person name="Dalrymple B.P."/>
            <person name="de Bono B."/>
            <person name="Della Gatta G."/>
            <person name="di Bernardo D."/>
            <person name="Down T."/>
            <person name="Engstrom P."/>
            <person name="Fagiolini M."/>
            <person name="Faulkner G."/>
            <person name="Fletcher C.F."/>
            <person name="Fukushima T."/>
            <person name="Furuno M."/>
            <person name="Futaki S."/>
            <person name="Gariboldi M."/>
            <person name="Georgii-Hemming P."/>
            <person name="Gingeras T.R."/>
            <person name="Gojobori T."/>
            <person name="Green R.E."/>
            <person name="Gustincich S."/>
            <person name="Harbers M."/>
            <person name="Hayashi Y."/>
            <person name="Hensch T.K."/>
            <person name="Hirokawa N."/>
            <person name="Hill D."/>
            <person name="Huminiecki L."/>
            <person name="Iacono M."/>
            <person name="Ikeo K."/>
            <person name="Iwama A."/>
            <person name="Ishikawa T."/>
            <person name="Jakt M."/>
            <person name="Kanapin A."/>
            <person name="Katoh M."/>
            <person name="Kawasawa Y."/>
            <person name="Kelso J."/>
            <person name="Kitamura H."/>
            <person name="Kitano H."/>
            <person name="Kollias G."/>
            <person name="Krishnan S.P."/>
            <person name="Kruger A."/>
            <person name="Kummerfeld S.K."/>
            <person name="Kurochkin I.V."/>
            <person name="Lareau L.F."/>
            <person name="Lazarevic D."/>
            <person name="Lipovich L."/>
            <person name="Liu J."/>
            <person name="Liuni S."/>
            <person name="McWilliam S."/>
            <person name="Madan Babu M."/>
            <person name="Madera M."/>
            <person name="Marchionni L."/>
            <person name="Matsuda H."/>
            <person name="Matsuzawa S."/>
            <person name="Miki H."/>
            <person name="Mignone F."/>
            <person name="Miyake S."/>
            <person name="Morris K."/>
            <person name="Mottagui-Tabar S."/>
            <person name="Mulder N."/>
            <person name="Nakano N."/>
            <person name="Nakauchi H."/>
            <person name="Ng P."/>
            <person name="Nilsson R."/>
            <person name="Nishiguchi S."/>
            <person name="Nishikawa S."/>
            <person name="Nori F."/>
            <person name="Ohara O."/>
            <person name="Okazaki Y."/>
            <person name="Orlando V."/>
            <person name="Pang K.C."/>
            <person name="Pavan W.J."/>
            <person name="Pavesi G."/>
            <person name="Pesole G."/>
            <person name="Petrovsky N."/>
            <person name="Piazza S."/>
            <person name="Reed J."/>
            <person name="Reid J.F."/>
            <person name="Ring B.Z."/>
            <person name="Ringwald M."/>
            <person name="Rost B."/>
            <person name="Ruan Y."/>
            <person name="Salzberg S.L."/>
            <person name="Sandelin A."/>
            <person name="Schneider C."/>
            <person name="Schoenbach C."/>
            <person name="Sekiguchi K."/>
            <person name="Semple C.A."/>
            <person name="Seno S."/>
            <person name="Sessa L."/>
            <person name="Sheng Y."/>
            <person name="Shibata Y."/>
            <person name="Shimada H."/>
            <person name="Shimada K."/>
            <person name="Silva D."/>
            <person name="Sinclair B."/>
            <person name="Sperling S."/>
            <person name="Stupka E."/>
            <person name="Sugiura K."/>
            <person name="Sultana R."/>
            <person name="Takenaka Y."/>
            <person name="Taki K."/>
            <person name="Tammoja K."/>
            <person name="Tan S.L."/>
            <person name="Tang S."/>
            <person name="Taylor M.S."/>
            <person name="Tegner J."/>
            <person name="Teichmann S.A."/>
            <person name="Ueda H.R."/>
            <person name="van Nimwegen E."/>
            <person name="Verardo R."/>
            <person name="Wei C.L."/>
            <person name="Yagi K."/>
            <person name="Yamanishi H."/>
            <person name="Zabarovsky E."/>
            <person name="Zhu S."/>
            <person name="Zimmer A."/>
            <person name="Hide W."/>
            <person name="Bult C."/>
            <person name="Grimmond S.M."/>
            <person name="Teasdale R.D."/>
            <person name="Liu E.T."/>
            <person name="Brusic V."/>
            <person name="Quackenbush J."/>
            <person name="Wahlestedt C."/>
            <person name="Mattick J.S."/>
            <person name="Hume D.A."/>
            <person name="Kai C."/>
            <person name="Sasaki D."/>
            <person name="Tomaru Y."/>
            <person name="Fukuda S."/>
            <person name="Kanamori-Katayama M."/>
            <person name="Suzuki M."/>
            <person name="Aoki J."/>
            <person name="Arakawa T."/>
            <person name="Iida J."/>
            <person name="Imamura K."/>
            <person name="Itoh M."/>
            <person name="Kato T."/>
            <person name="Kawaji H."/>
            <person name="Kawagashira N."/>
            <person name="Kawashima T."/>
            <person name="Kojima M."/>
            <person name="Kondo S."/>
            <person name="Konno H."/>
            <person name="Nakano K."/>
            <person name="Ninomiya N."/>
            <person name="Nishio T."/>
            <person name="Okada M."/>
            <person name="Plessy C."/>
            <person name="Shibata K."/>
            <person name="Shiraki T."/>
            <person name="Suzuki S."/>
            <person name="Tagami M."/>
            <person name="Waki K."/>
            <person name="Watahiki A."/>
            <person name="Okamura-Oho Y."/>
            <person name="Suzuki H."/>
            <person name="Kawai J."/>
            <person name="Hayashizaki Y."/>
        </authorList>
    </citation>
    <scope>NUCLEOTIDE SEQUENCE [LARGE SCALE MRNA] (ISOFORM 1)</scope>
    <source>
        <strain>C57BL/6J</strain>
        <tissue>Medulla oblongata</tissue>
        <tissue>Thymus</tissue>
    </source>
</reference>
<reference key="2">
    <citation type="journal article" date="2009" name="PLoS Biol.">
        <title>Lineage-specific biology revealed by a finished genome assembly of the mouse.</title>
        <authorList>
            <person name="Church D.M."/>
            <person name="Goodstadt L."/>
            <person name="Hillier L.W."/>
            <person name="Zody M.C."/>
            <person name="Goldstein S."/>
            <person name="She X."/>
            <person name="Bult C.J."/>
            <person name="Agarwala R."/>
            <person name="Cherry J.L."/>
            <person name="DiCuccio M."/>
            <person name="Hlavina W."/>
            <person name="Kapustin Y."/>
            <person name="Meric P."/>
            <person name="Maglott D."/>
            <person name="Birtle Z."/>
            <person name="Marques A.C."/>
            <person name="Graves T."/>
            <person name="Zhou S."/>
            <person name="Teague B."/>
            <person name="Potamousis K."/>
            <person name="Churas C."/>
            <person name="Place M."/>
            <person name="Herschleb J."/>
            <person name="Runnheim R."/>
            <person name="Forrest D."/>
            <person name="Amos-Landgraf J."/>
            <person name="Schwartz D.C."/>
            <person name="Cheng Z."/>
            <person name="Lindblad-Toh K."/>
            <person name="Eichler E.E."/>
            <person name="Ponting C.P."/>
        </authorList>
    </citation>
    <scope>NUCLEOTIDE SEQUENCE [LARGE SCALE GENOMIC DNA]</scope>
    <source>
        <strain>C57BL/6J</strain>
    </source>
</reference>
<reference key="3">
    <citation type="journal article" date="2004" name="Genome Res.">
        <title>The status, quality, and expansion of the NIH full-length cDNA project: the Mammalian Gene Collection (MGC).</title>
        <authorList>
            <consortium name="The MGC Project Team"/>
        </authorList>
    </citation>
    <scope>NUCLEOTIDE SEQUENCE [LARGE SCALE MRNA] (ISOFORM 2)</scope>
    <source>
        <strain>C57BL/6J</strain>
        <tissue>Brain</tissue>
    </source>
</reference>
<comment type="alternative products">
    <event type="alternative splicing"/>
    <isoform>
        <id>Q8CCX5-1</id>
        <name>1</name>
        <sequence type="displayed"/>
    </isoform>
    <isoform>
        <id>Q8CCX5-2</id>
        <name>2</name>
        <sequence type="described" ref="VSP_034745"/>
    </isoform>
</comment>
<comment type="similarity">
    <text evidence="2">Belongs to the intermediate filament family.</text>
</comment>
<comment type="sequence caution" evidence="4">
    <conflict type="erroneous termination">
        <sequence resource="EMBL-CDS" id="BAE23776"/>
    </conflict>
    <text>Truncated C-terminus.</text>
</comment>
<keyword id="KW-0025">Alternative splicing</keyword>
<keyword id="KW-0175">Coiled coil</keyword>
<keyword id="KW-0403">Intermediate filament</keyword>
<keyword id="KW-0416">Keratin</keyword>
<keyword id="KW-1185">Reference proteome</keyword>
<accession>Q8CCX5</accession>
<accession>Q3UU52</accession>
<accession>Q68FD8</accession>